<accession>Q9UBL6</accession>
<feature type="chain" id="PRO_0000144848" description="Copine-7">
    <location>
        <begin position="1"/>
        <end position="633"/>
    </location>
</feature>
<feature type="domain" description="C2 1" evidence="3">
    <location>
        <begin position="2"/>
        <end position="133"/>
    </location>
</feature>
<feature type="domain" description="C2 2" evidence="3">
    <location>
        <begin position="212"/>
        <end position="339"/>
    </location>
</feature>
<feature type="domain" description="VWFA" evidence="4">
    <location>
        <begin position="382"/>
        <end position="581"/>
    </location>
</feature>
<feature type="binding site" evidence="3">
    <location>
        <position position="245"/>
    </location>
    <ligand>
        <name>Ca(2+)</name>
        <dbReference type="ChEBI" id="CHEBI:29108"/>
        <label>1</label>
    </ligand>
</feature>
<feature type="binding site" evidence="3">
    <location>
        <position position="245"/>
    </location>
    <ligand>
        <name>Ca(2+)</name>
        <dbReference type="ChEBI" id="CHEBI:29108"/>
        <label>2</label>
    </ligand>
</feature>
<feature type="binding site" evidence="3">
    <location>
        <position position="251"/>
    </location>
    <ligand>
        <name>Ca(2+)</name>
        <dbReference type="ChEBI" id="CHEBI:29108"/>
        <label>1</label>
    </ligand>
</feature>
<feature type="binding site" evidence="3">
    <location>
        <position position="307"/>
    </location>
    <ligand>
        <name>Ca(2+)</name>
        <dbReference type="ChEBI" id="CHEBI:29108"/>
        <label>1</label>
    </ligand>
</feature>
<feature type="binding site" evidence="3">
    <location>
        <position position="307"/>
    </location>
    <ligand>
        <name>Ca(2+)</name>
        <dbReference type="ChEBI" id="CHEBI:29108"/>
        <label>2</label>
    </ligand>
</feature>
<feature type="binding site" evidence="3">
    <location>
        <position position="309"/>
    </location>
    <ligand>
        <name>Ca(2+)</name>
        <dbReference type="ChEBI" id="CHEBI:29108"/>
        <label>1</label>
    </ligand>
</feature>
<feature type="binding site" evidence="3">
    <location>
        <position position="309"/>
    </location>
    <ligand>
        <name>Ca(2+)</name>
        <dbReference type="ChEBI" id="CHEBI:29108"/>
        <label>2</label>
    </ligand>
</feature>
<feature type="binding site" evidence="3">
    <location>
        <position position="315"/>
    </location>
    <ligand>
        <name>Ca(2+)</name>
        <dbReference type="ChEBI" id="CHEBI:29108"/>
        <label>2</label>
    </ligand>
</feature>
<feature type="splice variant" id="VSP_001215" description="In isoform 2." evidence="9">
    <location>
        <begin position="120"/>
        <end position="194"/>
    </location>
</feature>
<feature type="sequence variant" id="VAR_021955" description="In dbSNP:rs455527.">
    <original>F</original>
    <variation>L</variation>
    <location>
        <position position="77"/>
    </location>
</feature>
<feature type="sequence variant" id="VAR_033822" description="In dbSNP:rs28568523.">
    <original>R</original>
    <variation>Q</variation>
    <location>
        <position position="397"/>
    </location>
</feature>
<feature type="sequence variant" id="VAR_048849" description="In dbSNP:rs35731090.">
    <original>K</original>
    <variation>E</variation>
    <location>
        <position position="507"/>
    </location>
</feature>
<feature type="sequence variant" id="VAR_021956" description="In dbSNP:rs3751682.">
    <original>P</original>
    <variation>L</variation>
    <location>
        <position position="633"/>
    </location>
</feature>
<reference key="1">
    <citation type="journal article" date="1999" name="Genomics">
        <title>Characterization of copine VII, a new member of the copine family, and its exclusion as a candidate in sporadic breast cancers with loss of heterozygosity at 16q24.3.</title>
        <authorList>
            <person name="Savino M."/>
            <person name="D'Apolito M."/>
            <person name="Centra M."/>
            <person name="van Beerendonk H.M."/>
            <person name="Cleton-Jansen A.-M."/>
            <person name="Whitmore S.A."/>
            <person name="Crawford J."/>
            <person name="Callen D.F."/>
            <person name="Zelante L."/>
            <person name="Savoia A."/>
        </authorList>
    </citation>
    <scope>NUCLEOTIDE SEQUENCE [GENOMIC DNA / MRNA] (ISOFORM 1)</scope>
    <scope>TISSUE SPECIFICITY</scope>
</reference>
<reference key="2">
    <citation type="journal article" date="2004" name="Genome Res.">
        <title>The status, quality, and expansion of the NIH full-length cDNA project: the Mammalian Gene Collection (MGC).</title>
        <authorList>
            <consortium name="The MGC Project Team"/>
        </authorList>
    </citation>
    <scope>NUCLEOTIDE SEQUENCE [LARGE SCALE MRNA] (ISOFORM 2)</scope>
    <source>
        <tissue>Brain</tissue>
    </source>
</reference>
<reference key="3">
    <citation type="journal article" date="2003" name="J. Leukoc. Biol.">
        <title>Tissue expression of copines and isolation of copines I and III from the cytosol of human neutrophils.</title>
        <authorList>
            <person name="Cowland J.B."/>
            <person name="Carter D."/>
            <person name="Bjerregaard M.D."/>
            <person name="Johnsen A.H."/>
            <person name="Borregaard N."/>
            <person name="Lollike K."/>
        </authorList>
    </citation>
    <scope>TISSUE SPECIFICITY</scope>
</reference>
<reference key="4">
    <citation type="journal article" date="2010" name="FEBS J.">
        <title>Copines-1, -2, -3, -6 and -7 show different calcium-dependent intracellular membrane translocation and targeting.</title>
        <authorList>
            <person name="Perestenko P.V."/>
            <person name="Pooler A.M."/>
            <person name="Noorbakhshnia M."/>
            <person name="Gray A."/>
            <person name="Bauccio C."/>
            <person name="Jeffrey McIlhinney R.A."/>
        </authorList>
    </citation>
    <scope>SUBCELLULAR LOCATION</scope>
</reference>
<keyword id="KW-0025">Alternative splicing</keyword>
<keyword id="KW-0106">Calcium</keyword>
<keyword id="KW-1003">Cell membrane</keyword>
<keyword id="KW-0963">Cytoplasm</keyword>
<keyword id="KW-0472">Membrane</keyword>
<keyword id="KW-0479">Metal-binding</keyword>
<keyword id="KW-0539">Nucleus</keyword>
<keyword id="KW-1267">Proteomics identification</keyword>
<keyword id="KW-1185">Reference proteome</keyword>
<keyword id="KW-0677">Repeat</keyword>
<sequence length="633" mass="70294">MSAGSERGAAATPGGLPAPCASKVELRLSCRHLLDRDPLTKSDPSVALLQQAQGQWVQVGRTEVVRSSLHPVFSKVFTVDYYFEEVQRLRFEVYDTHGPSGFSCQEDDFLGGMECTLGQPAQKWLLQVVMRVSVDVLGPAGHCAKHFLCCTESSHLARTGPSFLLRYDDLCLPWATAGAVRWWTCRGGHTQGWQIVAQKKVTRPLLLKFGRNAGKSTITVIAEDISGNNGYVELSFRARKLDDKDLFSKSDPFLELYRVNDDQGLQLVYRTEVVKNNLNPVWEAFKVSLSSLCSCEETRPLKCLVWDYDSRGKHDFIGEFSTTFEEMQKAFEEGQAQWDCVNPKYKQKRRSYKNSGVVVLADLKFHRVYSFLDYIMGGCQIHFTVAIDFTASNGDPRNSCSLHYINPYQPNEYLKALVSVGEICQDYDSDKRFSALGFGARIPPKYEVSHDFAINFNPEDDECEGIQGVVEAYQNCLPRVQLYGPTNVAPIISKVARVAAAEESTGKASQYYILLILTDGVVTDMADTREAIVRASRLPMSIIIVGVGNADFTDMQVLDGDDGVLRSPRGEPALRDIVQFVPFRELKNASPAALAKCVLAEVPKQVVEYYSHRGLPPRSLGVPAGEASPGCTP</sequence>
<name>CPNE7_HUMAN</name>
<organism>
    <name type="scientific">Homo sapiens</name>
    <name type="common">Human</name>
    <dbReference type="NCBI Taxonomy" id="9606"/>
    <lineage>
        <taxon>Eukaryota</taxon>
        <taxon>Metazoa</taxon>
        <taxon>Chordata</taxon>
        <taxon>Craniata</taxon>
        <taxon>Vertebrata</taxon>
        <taxon>Euteleostomi</taxon>
        <taxon>Mammalia</taxon>
        <taxon>Eutheria</taxon>
        <taxon>Euarchontoglires</taxon>
        <taxon>Primates</taxon>
        <taxon>Haplorrhini</taxon>
        <taxon>Catarrhini</taxon>
        <taxon>Hominidae</taxon>
        <taxon>Homo</taxon>
    </lineage>
</organism>
<dbReference type="EMBL" id="AJ133798">
    <property type="protein sequence ID" value="CAB61431.1"/>
    <property type="molecule type" value="mRNA"/>
</dbReference>
<dbReference type="EMBL" id="AJ133799">
    <property type="protein sequence ID" value="CAB61446.1"/>
    <property type="molecule type" value="Genomic_DNA"/>
</dbReference>
<dbReference type="EMBL" id="AJ133800">
    <property type="protein sequence ID" value="CAB61446.1"/>
    <property type="status" value="JOINED"/>
    <property type="molecule type" value="Genomic_DNA"/>
</dbReference>
<dbReference type="EMBL" id="AJ133801">
    <property type="protein sequence ID" value="CAB61446.1"/>
    <property type="status" value="JOINED"/>
    <property type="molecule type" value="Genomic_DNA"/>
</dbReference>
<dbReference type="EMBL" id="AJ133802">
    <property type="protein sequence ID" value="CAB61446.1"/>
    <property type="status" value="JOINED"/>
    <property type="molecule type" value="Genomic_DNA"/>
</dbReference>
<dbReference type="EMBL" id="AJ133803">
    <property type="protein sequence ID" value="CAB61446.1"/>
    <property type="status" value="JOINED"/>
    <property type="molecule type" value="Genomic_DNA"/>
</dbReference>
<dbReference type="EMBL" id="AJ133804">
    <property type="protein sequence ID" value="CAB61446.1"/>
    <property type="status" value="JOINED"/>
    <property type="molecule type" value="Genomic_DNA"/>
</dbReference>
<dbReference type="EMBL" id="AJ133805">
    <property type="protein sequence ID" value="CAB61446.1"/>
    <property type="status" value="JOINED"/>
    <property type="molecule type" value="Genomic_DNA"/>
</dbReference>
<dbReference type="EMBL" id="AJ133806">
    <property type="protein sequence ID" value="CAB61446.1"/>
    <property type="status" value="JOINED"/>
    <property type="molecule type" value="Genomic_DNA"/>
</dbReference>
<dbReference type="EMBL" id="AJ133807">
    <property type="protein sequence ID" value="CAB61446.1"/>
    <property type="status" value="JOINED"/>
    <property type="molecule type" value="Genomic_DNA"/>
</dbReference>
<dbReference type="EMBL" id="AJ133808">
    <property type="protein sequence ID" value="CAB61446.1"/>
    <property type="status" value="JOINED"/>
    <property type="molecule type" value="Genomic_DNA"/>
</dbReference>
<dbReference type="EMBL" id="AJ133809">
    <property type="protein sequence ID" value="CAB61446.1"/>
    <property type="status" value="JOINED"/>
    <property type="molecule type" value="Genomic_DNA"/>
</dbReference>
<dbReference type="EMBL" id="AJ133810">
    <property type="protein sequence ID" value="CAB61446.1"/>
    <property type="status" value="JOINED"/>
    <property type="molecule type" value="Genomic_DNA"/>
</dbReference>
<dbReference type="EMBL" id="BC035334">
    <property type="protein sequence ID" value="AAH35334.1"/>
    <property type="molecule type" value="mRNA"/>
</dbReference>
<dbReference type="EMBL" id="BC064577">
    <property type="protein sequence ID" value="AAH64577.1"/>
    <property type="molecule type" value="mRNA"/>
</dbReference>
<dbReference type="CCDS" id="CCDS10980.1">
    <molecule id="Q9UBL6-1"/>
</dbReference>
<dbReference type="CCDS" id="CCDS10981.1">
    <molecule id="Q9UBL6-2"/>
</dbReference>
<dbReference type="RefSeq" id="NP_055242.1">
    <molecule id="Q9UBL6-1"/>
    <property type="nucleotide sequence ID" value="NM_014427.5"/>
</dbReference>
<dbReference type="RefSeq" id="NP_705900.1">
    <molecule id="Q9UBL6-2"/>
    <property type="nucleotide sequence ID" value="NM_153636.3"/>
</dbReference>
<dbReference type="SMR" id="Q9UBL6"/>
<dbReference type="BioGRID" id="118023">
    <property type="interactions" value="82"/>
</dbReference>
<dbReference type="FunCoup" id="Q9UBL6">
    <property type="interactions" value="469"/>
</dbReference>
<dbReference type="IntAct" id="Q9UBL6">
    <property type="interactions" value="67"/>
</dbReference>
<dbReference type="MINT" id="Q9UBL6"/>
<dbReference type="STRING" id="9606.ENSP00000268720"/>
<dbReference type="GlyGen" id="Q9UBL6">
    <property type="glycosylation" value="1 site"/>
</dbReference>
<dbReference type="iPTMnet" id="Q9UBL6"/>
<dbReference type="PhosphoSitePlus" id="Q9UBL6"/>
<dbReference type="SwissPalm" id="Q9UBL6"/>
<dbReference type="BioMuta" id="CPNE7"/>
<dbReference type="DMDM" id="10719954"/>
<dbReference type="jPOST" id="Q9UBL6"/>
<dbReference type="MassIVE" id="Q9UBL6"/>
<dbReference type="PaxDb" id="9606-ENSP00000268720"/>
<dbReference type="PeptideAtlas" id="Q9UBL6"/>
<dbReference type="ProteomicsDB" id="83997">
    <molecule id="Q9UBL6-1"/>
</dbReference>
<dbReference type="ProteomicsDB" id="83998">
    <molecule id="Q9UBL6-2"/>
</dbReference>
<dbReference type="Pumba" id="Q9UBL6"/>
<dbReference type="Antibodypedia" id="30877">
    <property type="antibodies" value="55 antibodies from 20 providers"/>
</dbReference>
<dbReference type="DNASU" id="27132"/>
<dbReference type="Ensembl" id="ENST00000268720.9">
    <molecule id="Q9UBL6-1"/>
    <property type="protein sequence ID" value="ENSP00000268720.5"/>
    <property type="gene ID" value="ENSG00000178773.15"/>
</dbReference>
<dbReference type="Ensembl" id="ENST00000319518.13">
    <molecule id="Q9UBL6-2"/>
    <property type="protein sequence ID" value="ENSP00000317374.8"/>
    <property type="gene ID" value="ENSG00000178773.15"/>
</dbReference>
<dbReference type="GeneID" id="27132"/>
<dbReference type="KEGG" id="hsa:27132"/>
<dbReference type="MANE-Select" id="ENST00000319518.13">
    <molecule id="Q9UBL6-2"/>
    <property type="protein sequence ID" value="ENSP00000317374.8"/>
    <property type="RefSeq nucleotide sequence ID" value="NM_153636.3"/>
    <property type="RefSeq protein sequence ID" value="NP_705900.1"/>
</dbReference>
<dbReference type="UCSC" id="uc002fnp.3">
    <molecule id="Q9UBL6-1"/>
    <property type="organism name" value="human"/>
</dbReference>
<dbReference type="AGR" id="HGNC:2320"/>
<dbReference type="CTD" id="27132"/>
<dbReference type="DisGeNET" id="27132"/>
<dbReference type="GeneCards" id="CPNE7"/>
<dbReference type="HGNC" id="HGNC:2320">
    <property type="gene designation" value="CPNE7"/>
</dbReference>
<dbReference type="HPA" id="ENSG00000178773">
    <property type="expression patterns" value="Tissue enhanced (brain, epididymis, pituitary gland)"/>
</dbReference>
<dbReference type="MIM" id="605689">
    <property type="type" value="gene"/>
</dbReference>
<dbReference type="neXtProt" id="NX_Q9UBL6"/>
<dbReference type="OpenTargets" id="ENSG00000178773"/>
<dbReference type="PharmGKB" id="PA26837"/>
<dbReference type="VEuPathDB" id="HostDB:ENSG00000178773"/>
<dbReference type="eggNOG" id="KOG1327">
    <property type="taxonomic scope" value="Eukaryota"/>
</dbReference>
<dbReference type="GeneTree" id="ENSGT00940000160442"/>
<dbReference type="HOGENOM" id="CLU_020452_4_0_1"/>
<dbReference type="InParanoid" id="Q9UBL6"/>
<dbReference type="OMA" id="CSIGTRD"/>
<dbReference type="OrthoDB" id="5855668at2759"/>
<dbReference type="PAN-GO" id="Q9UBL6">
    <property type="GO annotations" value="3 GO annotations based on evolutionary models"/>
</dbReference>
<dbReference type="PhylomeDB" id="Q9UBL6"/>
<dbReference type="TreeFam" id="TF316419"/>
<dbReference type="PathwayCommons" id="Q9UBL6"/>
<dbReference type="Reactome" id="R-HSA-1483206">
    <property type="pathway name" value="Glycerophospholipid biosynthesis"/>
</dbReference>
<dbReference type="SignaLink" id="Q9UBL6"/>
<dbReference type="BioGRID-ORCS" id="27132">
    <property type="hits" value="217 hits in 1152 CRISPR screens"/>
</dbReference>
<dbReference type="ChiTaRS" id="CPNE7">
    <property type="organism name" value="human"/>
</dbReference>
<dbReference type="GenomeRNAi" id="27132"/>
<dbReference type="Pharos" id="Q9UBL6">
    <property type="development level" value="Tbio"/>
</dbReference>
<dbReference type="PRO" id="PR:Q9UBL6"/>
<dbReference type="Proteomes" id="UP000005640">
    <property type="component" value="Chromosome 16"/>
</dbReference>
<dbReference type="RNAct" id="Q9UBL6">
    <property type="molecule type" value="protein"/>
</dbReference>
<dbReference type="Bgee" id="ENSG00000178773">
    <property type="expression patterns" value="Expressed in lateral nuclear group of thalamus and 141 other cell types or tissues"/>
</dbReference>
<dbReference type="ExpressionAtlas" id="Q9UBL6">
    <property type="expression patterns" value="baseline and differential"/>
</dbReference>
<dbReference type="GO" id="GO:0005737">
    <property type="term" value="C:cytoplasm"/>
    <property type="evidence" value="ECO:0000314"/>
    <property type="project" value="UniProtKB"/>
</dbReference>
<dbReference type="GO" id="GO:0070062">
    <property type="term" value="C:extracellular exosome"/>
    <property type="evidence" value="ECO:0007005"/>
    <property type="project" value="UniProtKB"/>
</dbReference>
<dbReference type="GO" id="GO:0005634">
    <property type="term" value="C:nucleus"/>
    <property type="evidence" value="ECO:0000314"/>
    <property type="project" value="UniProtKB"/>
</dbReference>
<dbReference type="GO" id="GO:0005886">
    <property type="term" value="C:plasma membrane"/>
    <property type="evidence" value="ECO:0000314"/>
    <property type="project" value="UniProtKB"/>
</dbReference>
<dbReference type="GO" id="GO:0045202">
    <property type="term" value="C:synapse"/>
    <property type="evidence" value="ECO:0007669"/>
    <property type="project" value="Ensembl"/>
</dbReference>
<dbReference type="GO" id="GO:0005544">
    <property type="term" value="F:calcium-dependent phospholipid binding"/>
    <property type="evidence" value="ECO:0000318"/>
    <property type="project" value="GO_Central"/>
</dbReference>
<dbReference type="GO" id="GO:0046872">
    <property type="term" value="F:metal ion binding"/>
    <property type="evidence" value="ECO:0007669"/>
    <property type="project" value="UniProtKB-KW"/>
</dbReference>
<dbReference type="GO" id="GO:0071277">
    <property type="term" value="P:cellular response to calcium ion"/>
    <property type="evidence" value="ECO:0000314"/>
    <property type="project" value="UniProtKB"/>
</dbReference>
<dbReference type="GO" id="GO:0006629">
    <property type="term" value="P:lipid metabolic process"/>
    <property type="evidence" value="ECO:0000304"/>
    <property type="project" value="ProtInc"/>
</dbReference>
<dbReference type="CDD" id="cd04048">
    <property type="entry name" value="C2A_Copine"/>
    <property type="match status" value="1"/>
</dbReference>
<dbReference type="CDD" id="cd04047">
    <property type="entry name" value="C2B_Copine"/>
    <property type="match status" value="1"/>
</dbReference>
<dbReference type="CDD" id="cd01459">
    <property type="entry name" value="vWA_copine_like"/>
    <property type="match status" value="1"/>
</dbReference>
<dbReference type="FunFam" id="3.40.50.410:FF:000042">
    <property type="entry name" value="Copine 4"/>
    <property type="match status" value="1"/>
</dbReference>
<dbReference type="FunFam" id="2.60.40.150:FF:000132">
    <property type="entry name" value="Copine 7"/>
    <property type="match status" value="1"/>
</dbReference>
<dbReference type="FunFam" id="2.60.40.150:FF:000163">
    <property type="entry name" value="Copine 7"/>
    <property type="match status" value="1"/>
</dbReference>
<dbReference type="Gene3D" id="2.60.40.150">
    <property type="entry name" value="C2 domain"/>
    <property type="match status" value="2"/>
</dbReference>
<dbReference type="Gene3D" id="3.40.50.410">
    <property type="entry name" value="von Willebrand factor, type A domain"/>
    <property type="match status" value="1"/>
</dbReference>
<dbReference type="InterPro" id="IPR000008">
    <property type="entry name" value="C2_dom"/>
</dbReference>
<dbReference type="InterPro" id="IPR035892">
    <property type="entry name" value="C2_domain_sf"/>
</dbReference>
<dbReference type="InterPro" id="IPR037768">
    <property type="entry name" value="C2B_Copine"/>
</dbReference>
<dbReference type="InterPro" id="IPR045052">
    <property type="entry name" value="Copine"/>
</dbReference>
<dbReference type="InterPro" id="IPR010734">
    <property type="entry name" value="Copine_C"/>
</dbReference>
<dbReference type="InterPro" id="IPR002035">
    <property type="entry name" value="VWF_A"/>
</dbReference>
<dbReference type="InterPro" id="IPR036465">
    <property type="entry name" value="vWFA_dom_sf"/>
</dbReference>
<dbReference type="PANTHER" id="PTHR10857">
    <property type="entry name" value="COPINE"/>
    <property type="match status" value="1"/>
</dbReference>
<dbReference type="PANTHER" id="PTHR10857:SF6">
    <property type="entry name" value="COPINE-7"/>
    <property type="match status" value="1"/>
</dbReference>
<dbReference type="Pfam" id="PF00168">
    <property type="entry name" value="C2"/>
    <property type="match status" value="2"/>
</dbReference>
<dbReference type="Pfam" id="PF07002">
    <property type="entry name" value="Copine"/>
    <property type="match status" value="1"/>
</dbReference>
<dbReference type="SMART" id="SM00239">
    <property type="entry name" value="C2"/>
    <property type="match status" value="2"/>
</dbReference>
<dbReference type="SMART" id="SM00327">
    <property type="entry name" value="VWA"/>
    <property type="match status" value="1"/>
</dbReference>
<dbReference type="SUPFAM" id="SSF49562">
    <property type="entry name" value="C2 domain (Calcium/lipid-binding domain, CaLB)"/>
    <property type="match status" value="2"/>
</dbReference>
<dbReference type="SUPFAM" id="SSF53300">
    <property type="entry name" value="vWA-like"/>
    <property type="match status" value="1"/>
</dbReference>
<dbReference type="PROSITE" id="PS50004">
    <property type="entry name" value="C2"/>
    <property type="match status" value="2"/>
</dbReference>
<dbReference type="PROSITE" id="PS50234">
    <property type="entry name" value="VWFA"/>
    <property type="match status" value="1"/>
</dbReference>
<proteinExistence type="evidence at protein level"/>
<comment type="function">
    <text evidence="2">Calcium-dependent phospholipid-binding protein that may play a role in calcium-mediated intracellular processes.</text>
</comment>
<comment type="cofactor">
    <cofactor evidence="3">
        <name>Ca(2+)</name>
        <dbReference type="ChEBI" id="CHEBI:29108"/>
    </cofactor>
</comment>
<comment type="interaction">
    <interactant intactId="EBI-744841">
        <id>Q9UBL6</id>
    </interactant>
    <interactant intactId="EBI-10173507">
        <id>Q6UY14-3</id>
        <label>ADAMTSL4</label>
    </interactant>
    <organismsDiffer>false</organismsDiffer>
    <experiments>3</experiments>
</comment>
<comment type="interaction">
    <interactant intactId="EBI-12012272">
        <id>Q9UBL6-2</id>
    </interactant>
    <interactant intactId="EBI-10173507">
        <id>Q6UY14-3</id>
        <label>ADAMTSL4</label>
    </interactant>
    <organismsDiffer>false</organismsDiffer>
    <experiments>3</experiments>
</comment>
<comment type="interaction">
    <interactant intactId="EBI-12012272">
        <id>Q9UBL6-2</id>
    </interactant>
    <interactant intactId="EBI-739580">
        <id>Q13137</id>
        <label>CALCOCO2</label>
    </interactant>
    <organismsDiffer>false</organismsDiffer>
    <experiments>3</experiments>
</comment>
<comment type="interaction">
    <interactant intactId="EBI-12012272">
        <id>Q9UBL6-2</id>
    </interactant>
    <interactant intactId="EBI-742054">
        <id>Q96D03</id>
        <label>DDIT4L</label>
    </interactant>
    <organismsDiffer>false</organismsDiffer>
    <experiments>5</experiments>
</comment>
<comment type="interaction">
    <interactant intactId="EBI-12012272">
        <id>Q9UBL6-2</id>
    </interactant>
    <interactant intactId="EBI-7357329">
        <id>Q9H596</id>
        <label>DUSP21</label>
    </interactant>
    <organismsDiffer>false</organismsDiffer>
    <experiments>3</experiments>
</comment>
<comment type="interaction">
    <interactant intactId="EBI-12012272">
        <id>Q9UBL6-2</id>
    </interactant>
    <interactant intactId="EBI-2349927">
        <id>Q5JST6</id>
        <label>EFHC2</label>
    </interactant>
    <organismsDiffer>false</organismsDiffer>
    <experiments>3</experiments>
</comment>
<comment type="interaction">
    <interactant intactId="EBI-12012272">
        <id>Q9UBL6-2</id>
    </interactant>
    <interactant intactId="EBI-749411">
        <id>Q96SL4</id>
        <label>GPX7</label>
    </interactant>
    <organismsDiffer>false</organismsDiffer>
    <experiments>5</experiments>
</comment>
<comment type="interaction">
    <interactant intactId="EBI-12012272">
        <id>Q9UBL6-2</id>
    </interactant>
    <interactant intactId="EBI-747204">
        <id>Q9UKT9</id>
        <label>IKZF3</label>
    </interactant>
    <organismsDiffer>false</organismsDiffer>
    <experiments>3</experiments>
</comment>
<comment type="interaction">
    <interactant intactId="EBI-12012272">
        <id>Q9UBL6-2</id>
    </interactant>
    <interactant intactId="EBI-2949715">
        <id>O95678</id>
        <label>KRT75</label>
    </interactant>
    <organismsDiffer>false</organismsDiffer>
    <experiments>3</experiments>
</comment>
<comment type="interaction">
    <interactant intactId="EBI-12012272">
        <id>Q9UBL6-2</id>
    </interactant>
    <interactant intactId="EBI-12039345">
        <id>Q9UBR4-2</id>
        <label>LHX3</label>
    </interactant>
    <organismsDiffer>false</organismsDiffer>
    <experiments>3</experiments>
</comment>
<comment type="interaction">
    <interactant intactId="EBI-12012272">
        <id>Q9UBL6-2</id>
    </interactant>
    <interactant intactId="EBI-16439278">
        <id>Q6FHY5</id>
        <label>MEOX2</label>
    </interactant>
    <organismsDiffer>false</organismsDiffer>
    <experiments>3</experiments>
</comment>
<comment type="interaction">
    <interactant intactId="EBI-12012272">
        <id>Q9UBL6-2</id>
    </interactant>
    <interactant intactId="EBI-11956853">
        <id>Q8N987</id>
        <label>NECAB1</label>
    </interactant>
    <organismsDiffer>false</organismsDiffer>
    <experiments>7</experiments>
</comment>
<comment type="interaction">
    <interactant intactId="EBI-12012272">
        <id>Q9UBL6-2</id>
    </interactant>
    <interactant intactId="EBI-12865884">
        <id>Q5XKR4</id>
        <label>OTP</label>
    </interactant>
    <organismsDiffer>false</organismsDiffer>
    <experiments>3</experiments>
</comment>
<comment type="interaction">
    <interactant intactId="EBI-12012272">
        <id>Q9UBL6-2</id>
    </interactant>
    <interactant intactId="EBI-10302990">
        <id>Q9BYU1</id>
        <label>PBX4</label>
    </interactant>
    <organismsDiffer>false</organismsDiffer>
    <experiments>3</experiments>
</comment>
<comment type="interaction">
    <interactant intactId="EBI-12012272">
        <id>Q9UBL6-2</id>
    </interactant>
    <interactant intactId="EBI-79165">
        <id>Q9NRD5</id>
        <label>PICK1</label>
    </interactant>
    <organismsDiffer>false</organismsDiffer>
    <experiments>3</experiments>
</comment>
<comment type="interaction">
    <interactant intactId="EBI-12012272">
        <id>Q9UBL6-2</id>
    </interactant>
    <interactant intactId="EBI-2117450">
        <id>P30613</id>
        <label>PKLR</label>
    </interactant>
    <organismsDiffer>false</organismsDiffer>
    <experiments>3</experiments>
</comment>
<comment type="interaction">
    <interactant intactId="EBI-12012272">
        <id>Q9UBL6-2</id>
    </interactant>
    <interactant intactId="EBI-10829018">
        <id>Q04864-2</id>
        <label>REL</label>
    </interactant>
    <organismsDiffer>false</organismsDiffer>
    <experiments>3</experiments>
</comment>
<comment type="interaction">
    <interactant intactId="EBI-12012272">
        <id>Q9UBL6-2</id>
    </interactant>
    <interactant intactId="EBI-3957636">
        <id>Q8IYX7</id>
        <label>SAXO1</label>
    </interactant>
    <organismsDiffer>false</organismsDiffer>
    <experiments>3</experiments>
</comment>
<comment type="interaction">
    <interactant intactId="EBI-12012272">
        <id>Q9UBL6-2</id>
    </interactant>
    <interactant intactId="EBI-11139477">
        <id>Q96N21</id>
        <label>TEPSIN</label>
    </interactant>
    <organismsDiffer>false</organismsDiffer>
    <experiments>3</experiments>
</comment>
<comment type="interaction">
    <interactant intactId="EBI-12012272">
        <id>Q9UBL6-2</id>
    </interactant>
    <interactant intactId="EBI-740098">
        <id>P36406</id>
        <label>TRIM23</label>
    </interactant>
    <organismsDiffer>false</organismsDiffer>
    <experiments>3</experiments>
</comment>
<comment type="interaction">
    <interactant intactId="EBI-12012272">
        <id>Q9UBL6-2</id>
    </interactant>
    <interactant intactId="EBI-719493">
        <id>P14373</id>
        <label>TRIM27</label>
    </interactant>
    <organismsDiffer>false</organismsDiffer>
    <experiments>3</experiments>
</comment>
<comment type="interaction">
    <interactant intactId="EBI-12012272">
        <id>Q9UBL6-2</id>
    </interactant>
    <interactant intactId="EBI-11419867">
        <id>Q8TF47</id>
        <label>ZFP90</label>
    </interactant>
    <organismsDiffer>false</organismsDiffer>
    <experiments>3</experiments>
</comment>
<comment type="interaction">
    <interactant intactId="EBI-12012272">
        <id>Q9UBL6-2</id>
    </interactant>
    <interactant intactId="EBI-12011330">
        <id>Q8NF64-3</id>
        <label>ZMIZ2</label>
    </interactant>
    <organismsDiffer>false</organismsDiffer>
    <experiments>3</experiments>
</comment>
<comment type="interaction">
    <interactant intactId="EBI-12012272">
        <id>Q9UBL6-2</id>
    </interactant>
    <interactant intactId="EBI-8648067">
        <id>P17022</id>
        <label>ZNF18</label>
    </interactant>
    <organismsDiffer>false</organismsDiffer>
    <experiments>3</experiments>
</comment>
<comment type="interaction">
    <interactant intactId="EBI-12012272">
        <id>Q9UBL6-2</id>
    </interactant>
    <interactant intactId="EBI-17269964">
        <id>Q6S9Z5</id>
        <label>ZNF474</label>
    </interactant>
    <organismsDiffer>false</organismsDiffer>
    <experiments>3</experiments>
</comment>
<comment type="interaction">
    <interactant intactId="EBI-12012272">
        <id>Q9UBL6-2</id>
    </interactant>
    <interactant intactId="EBI-10172590">
        <id>Q7Z3I7</id>
        <label>ZNF572</label>
    </interactant>
    <organismsDiffer>false</organismsDiffer>
    <experiments>3</experiments>
</comment>
<comment type="interaction">
    <interactant intactId="EBI-12012272">
        <id>Q9UBL6-2</id>
    </interactant>
    <interactant intactId="EBI-625509">
        <id>Q8N720</id>
        <label>ZNF655</label>
    </interactant>
    <organismsDiffer>false</organismsDiffer>
    <experiments>3</experiments>
</comment>
<comment type="interaction">
    <interactant intactId="EBI-12012272">
        <id>Q9UBL6-2</id>
    </interactant>
    <interactant intactId="EBI-10251462">
        <id>Q6NX45</id>
        <label>ZNF774</label>
    </interactant>
    <organismsDiffer>false</organismsDiffer>
    <experiments>3</experiments>
</comment>
<comment type="interaction">
    <interactant intactId="EBI-12012272">
        <id>Q9UBL6-2</id>
    </interactant>
    <interactant intactId="EBI-527853">
        <id>Q9UGI0</id>
        <label>ZRANB1</label>
    </interactant>
    <organismsDiffer>false</organismsDiffer>
    <experiments>3</experiments>
</comment>
<comment type="subcellular location">
    <subcellularLocation>
        <location evidence="7">Cytoplasm</location>
    </subcellularLocation>
    <subcellularLocation>
        <location evidence="7">Nucleus</location>
    </subcellularLocation>
    <subcellularLocation>
        <location evidence="7">Cell membrane</location>
    </subcellularLocation>
    <text evidence="7">Translocates to the cell membrane in a calcium-dependent manner (PubMed:21087455).</text>
</comment>
<comment type="alternative products">
    <event type="alternative splicing"/>
    <isoform>
        <id>Q9UBL6-1</id>
        <name>1</name>
        <sequence type="displayed"/>
    </isoform>
    <isoform>
        <id>Q9UBL6-2</id>
        <name>2</name>
        <sequence type="described" ref="VSP_001215"/>
    </isoform>
</comment>
<comment type="tissue specificity">
    <text evidence="5 6">Expressed in the brain, testis, thymus and small intestine (PubMed:10534407, PubMed:12949241).</text>
</comment>
<comment type="domain">
    <text evidence="1">The C2 domain 1 is not necessary for calcium-mediated translocation and association to the plasma membrane. The C2 domain 2 is necessary for calcium-mediated translocation and association to the plasma membrane.</text>
</comment>
<comment type="similarity">
    <text evidence="10">Belongs to the copine family.</text>
</comment>
<protein>
    <recommendedName>
        <fullName evidence="10">Copine-7</fullName>
    </recommendedName>
    <alternativeName>
        <fullName evidence="8 11">Copine VII</fullName>
    </alternativeName>
</protein>
<evidence type="ECO:0000250" key="1">
    <source>
        <dbReference type="UniProtKB" id="H1UBN0"/>
    </source>
</evidence>
<evidence type="ECO:0000250" key="2">
    <source>
        <dbReference type="UniProtKB" id="Q99829"/>
    </source>
</evidence>
<evidence type="ECO:0000255" key="3">
    <source>
        <dbReference type="PROSITE-ProRule" id="PRU00041"/>
    </source>
</evidence>
<evidence type="ECO:0000255" key="4">
    <source>
        <dbReference type="PROSITE-ProRule" id="PRU00219"/>
    </source>
</evidence>
<evidence type="ECO:0000269" key="5">
    <source>
    </source>
</evidence>
<evidence type="ECO:0000269" key="6">
    <source>
    </source>
</evidence>
<evidence type="ECO:0000269" key="7">
    <source>
    </source>
</evidence>
<evidence type="ECO:0000303" key="8">
    <source>
    </source>
</evidence>
<evidence type="ECO:0000303" key="9">
    <source>
    </source>
</evidence>
<evidence type="ECO:0000305" key="10"/>
<evidence type="ECO:0000312" key="11">
    <source>
        <dbReference type="HGNC" id="HGNC:2320"/>
    </source>
</evidence>
<gene>
    <name evidence="11" type="primary">CPNE7</name>
</gene>